<gene>
    <name evidence="1" type="primary">tal</name>
    <name type="ordered locus">AnaeK_4186</name>
</gene>
<protein>
    <recommendedName>
        <fullName evidence="1">Probable transaldolase</fullName>
        <ecNumber evidence="1">2.2.1.2</ecNumber>
    </recommendedName>
</protein>
<evidence type="ECO:0000255" key="1">
    <source>
        <dbReference type="HAMAP-Rule" id="MF_00494"/>
    </source>
</evidence>
<keyword id="KW-0963">Cytoplasm</keyword>
<keyword id="KW-0570">Pentose shunt</keyword>
<keyword id="KW-0704">Schiff base</keyword>
<keyword id="KW-0808">Transferase</keyword>
<feature type="chain" id="PRO_1000126274" description="Probable transaldolase">
    <location>
        <begin position="1"/>
        <end position="217"/>
    </location>
</feature>
<feature type="active site" description="Schiff-base intermediate with substrate" evidence="1">
    <location>
        <position position="83"/>
    </location>
</feature>
<organism>
    <name type="scientific">Anaeromyxobacter sp. (strain K)</name>
    <dbReference type="NCBI Taxonomy" id="447217"/>
    <lineage>
        <taxon>Bacteria</taxon>
        <taxon>Pseudomonadati</taxon>
        <taxon>Myxococcota</taxon>
        <taxon>Myxococcia</taxon>
        <taxon>Myxococcales</taxon>
        <taxon>Cystobacterineae</taxon>
        <taxon>Anaeromyxobacteraceae</taxon>
        <taxon>Anaeromyxobacter</taxon>
    </lineage>
</organism>
<accession>B4UHE7</accession>
<dbReference type="EC" id="2.2.1.2" evidence="1"/>
<dbReference type="EMBL" id="CP001131">
    <property type="protein sequence ID" value="ACG75389.1"/>
    <property type="molecule type" value="Genomic_DNA"/>
</dbReference>
<dbReference type="RefSeq" id="WP_012528142.1">
    <property type="nucleotide sequence ID" value="NC_011145.1"/>
</dbReference>
<dbReference type="SMR" id="B4UHE7"/>
<dbReference type="KEGG" id="ank:AnaeK_4186"/>
<dbReference type="HOGENOM" id="CLU_079764_0_0_7"/>
<dbReference type="OrthoDB" id="9807051at2"/>
<dbReference type="UniPathway" id="UPA00115">
    <property type="reaction ID" value="UER00414"/>
</dbReference>
<dbReference type="Proteomes" id="UP000001871">
    <property type="component" value="Chromosome"/>
</dbReference>
<dbReference type="GO" id="GO:0005737">
    <property type="term" value="C:cytoplasm"/>
    <property type="evidence" value="ECO:0007669"/>
    <property type="project" value="UniProtKB-SubCell"/>
</dbReference>
<dbReference type="GO" id="GO:0016832">
    <property type="term" value="F:aldehyde-lyase activity"/>
    <property type="evidence" value="ECO:0007669"/>
    <property type="project" value="InterPro"/>
</dbReference>
<dbReference type="GO" id="GO:0004801">
    <property type="term" value="F:transaldolase activity"/>
    <property type="evidence" value="ECO:0007669"/>
    <property type="project" value="UniProtKB-UniRule"/>
</dbReference>
<dbReference type="GO" id="GO:0005975">
    <property type="term" value="P:carbohydrate metabolic process"/>
    <property type="evidence" value="ECO:0007669"/>
    <property type="project" value="InterPro"/>
</dbReference>
<dbReference type="GO" id="GO:0006098">
    <property type="term" value="P:pentose-phosphate shunt"/>
    <property type="evidence" value="ECO:0007669"/>
    <property type="project" value="UniProtKB-UniRule"/>
</dbReference>
<dbReference type="CDD" id="cd00956">
    <property type="entry name" value="Transaldolase_FSA"/>
    <property type="match status" value="1"/>
</dbReference>
<dbReference type="FunFam" id="3.20.20.70:FF:000018">
    <property type="entry name" value="Probable transaldolase"/>
    <property type="match status" value="1"/>
</dbReference>
<dbReference type="Gene3D" id="3.20.20.70">
    <property type="entry name" value="Aldolase class I"/>
    <property type="match status" value="1"/>
</dbReference>
<dbReference type="HAMAP" id="MF_00494">
    <property type="entry name" value="Transaldolase_3b"/>
    <property type="match status" value="1"/>
</dbReference>
<dbReference type="InterPro" id="IPR013785">
    <property type="entry name" value="Aldolase_TIM"/>
</dbReference>
<dbReference type="InterPro" id="IPR001585">
    <property type="entry name" value="TAL/FSA"/>
</dbReference>
<dbReference type="InterPro" id="IPR022999">
    <property type="entry name" value="Transaldolase_3B"/>
</dbReference>
<dbReference type="InterPro" id="IPR004731">
    <property type="entry name" value="Transaldolase_3B/F6P_aldolase"/>
</dbReference>
<dbReference type="InterPro" id="IPR018225">
    <property type="entry name" value="Transaldolase_AS"/>
</dbReference>
<dbReference type="InterPro" id="IPR033919">
    <property type="entry name" value="TSA/FSA_arc/bac"/>
</dbReference>
<dbReference type="NCBIfam" id="TIGR00875">
    <property type="entry name" value="fsa_talC_mipB"/>
    <property type="match status" value="1"/>
</dbReference>
<dbReference type="PANTHER" id="PTHR10683:SF40">
    <property type="entry name" value="FRUCTOSE-6-PHOSPHATE ALDOLASE 1-RELATED"/>
    <property type="match status" value="1"/>
</dbReference>
<dbReference type="PANTHER" id="PTHR10683">
    <property type="entry name" value="TRANSALDOLASE"/>
    <property type="match status" value="1"/>
</dbReference>
<dbReference type="Pfam" id="PF00923">
    <property type="entry name" value="TAL_FSA"/>
    <property type="match status" value="1"/>
</dbReference>
<dbReference type="SUPFAM" id="SSF51569">
    <property type="entry name" value="Aldolase"/>
    <property type="match status" value="1"/>
</dbReference>
<dbReference type="PROSITE" id="PS01054">
    <property type="entry name" value="TRANSALDOLASE_1"/>
    <property type="match status" value="1"/>
</dbReference>
<dbReference type="PROSITE" id="PS00958">
    <property type="entry name" value="TRANSALDOLASE_2"/>
    <property type="match status" value="1"/>
</dbReference>
<name>TAL_ANASK</name>
<comment type="function">
    <text evidence="1">Transaldolase is important for the balance of metabolites in the pentose-phosphate pathway.</text>
</comment>
<comment type="catalytic activity">
    <reaction evidence="1">
        <text>D-sedoheptulose 7-phosphate + D-glyceraldehyde 3-phosphate = D-erythrose 4-phosphate + beta-D-fructose 6-phosphate</text>
        <dbReference type="Rhea" id="RHEA:17053"/>
        <dbReference type="ChEBI" id="CHEBI:16897"/>
        <dbReference type="ChEBI" id="CHEBI:57483"/>
        <dbReference type="ChEBI" id="CHEBI:57634"/>
        <dbReference type="ChEBI" id="CHEBI:59776"/>
        <dbReference type="EC" id="2.2.1.2"/>
    </reaction>
</comment>
<comment type="pathway">
    <text evidence="1">Carbohydrate degradation; pentose phosphate pathway; D-glyceraldehyde 3-phosphate and beta-D-fructose 6-phosphate from D-ribose 5-phosphate and D-xylulose 5-phosphate (non-oxidative stage): step 2/3.</text>
</comment>
<comment type="subcellular location">
    <subcellularLocation>
        <location evidence="1">Cytoplasm</location>
    </subcellularLocation>
</comment>
<comment type="similarity">
    <text evidence="1">Belongs to the transaldolase family. Type 3B subfamily.</text>
</comment>
<proteinExistence type="inferred from homology"/>
<sequence length="217" mass="23338">MKFFIDTADVGEIKKALALGLCDGVTTNPSLVAKTGRGFEDVLKEIVQLVPGPISAEVTATDYEGMLREGRHYAKFGSQVVIKVPLTVDGLRAVKTLTDEGTKVNVTLCFSPVQALLAAKAGATYISPFVGRLDDISQDGMAMVADIVQIYRNYGFKTQVLVASVRHPVHVLEAAKLGADVATIPYSVIEQLAKHPLTDAGLKKFLADWEKVPKAPK</sequence>
<reference key="1">
    <citation type="submission" date="2008-08" db="EMBL/GenBank/DDBJ databases">
        <title>Complete sequence of Anaeromyxobacter sp. K.</title>
        <authorList>
            <consortium name="US DOE Joint Genome Institute"/>
            <person name="Lucas S."/>
            <person name="Copeland A."/>
            <person name="Lapidus A."/>
            <person name="Glavina del Rio T."/>
            <person name="Dalin E."/>
            <person name="Tice H."/>
            <person name="Bruce D."/>
            <person name="Goodwin L."/>
            <person name="Pitluck S."/>
            <person name="Saunders E."/>
            <person name="Brettin T."/>
            <person name="Detter J.C."/>
            <person name="Han C."/>
            <person name="Larimer F."/>
            <person name="Land M."/>
            <person name="Hauser L."/>
            <person name="Kyrpides N."/>
            <person name="Ovchinnikiva G."/>
            <person name="Beliaev A."/>
        </authorList>
    </citation>
    <scope>NUCLEOTIDE SEQUENCE [LARGE SCALE GENOMIC DNA]</scope>
    <source>
        <strain>K</strain>
    </source>
</reference>